<organism>
    <name type="scientific">Escherichia coli (strain K12)</name>
    <dbReference type="NCBI Taxonomy" id="83333"/>
    <lineage>
        <taxon>Bacteria</taxon>
        <taxon>Pseudomonadati</taxon>
        <taxon>Pseudomonadota</taxon>
        <taxon>Gammaproteobacteria</taxon>
        <taxon>Enterobacterales</taxon>
        <taxon>Enterobacteriaceae</taxon>
        <taxon>Escherichia</taxon>
    </lineage>
</organism>
<feature type="signal peptide" evidence="1">
    <location>
        <begin position="1"/>
        <end position="23"/>
    </location>
</feature>
<feature type="chain" id="PRO_0000013783" description="Uncharacterized fimbrial-like protein YadM">
    <location>
        <begin position="24"/>
        <end position="189"/>
    </location>
</feature>
<feature type="region of interest" description="Disordered" evidence="2">
    <location>
        <begin position="104"/>
        <end position="125"/>
    </location>
</feature>
<feature type="compositionally biased region" description="Polar residues" evidence="2">
    <location>
        <begin position="113"/>
        <end position="123"/>
    </location>
</feature>
<dbReference type="EMBL" id="U00096">
    <property type="protein sequence ID" value="AAC73249.2"/>
    <property type="molecule type" value="Genomic_DNA"/>
</dbReference>
<dbReference type="EMBL" id="AP009048">
    <property type="protein sequence ID" value="BAB96715.1"/>
    <property type="molecule type" value="Genomic_DNA"/>
</dbReference>
<dbReference type="RefSeq" id="NP_414680.4">
    <property type="nucleotide sequence ID" value="NC_000913.3"/>
</dbReference>
<dbReference type="RefSeq" id="WP_000598300.1">
    <property type="nucleotide sequence ID" value="NZ_STEB01000010.1"/>
</dbReference>
<dbReference type="SMR" id="P37018"/>
<dbReference type="BioGRID" id="4259741">
    <property type="interactions" value="9"/>
</dbReference>
<dbReference type="FunCoup" id="P37018">
    <property type="interactions" value="4"/>
</dbReference>
<dbReference type="STRING" id="511145.b0138"/>
<dbReference type="PaxDb" id="511145-b0138"/>
<dbReference type="EnsemblBacteria" id="AAC73249">
    <property type="protein sequence ID" value="AAC73249"/>
    <property type="gene ID" value="b0138"/>
</dbReference>
<dbReference type="GeneID" id="944828"/>
<dbReference type="KEGG" id="ecj:JW0134"/>
<dbReference type="KEGG" id="eco:b0138"/>
<dbReference type="KEGG" id="ecoc:C3026_00595"/>
<dbReference type="PATRIC" id="fig|1411691.4.peg.2143"/>
<dbReference type="EchoBASE" id="EB2231"/>
<dbReference type="eggNOG" id="COG3539">
    <property type="taxonomic scope" value="Bacteria"/>
</dbReference>
<dbReference type="HOGENOM" id="CLU_119932_1_1_6"/>
<dbReference type="InParanoid" id="P37018"/>
<dbReference type="OMA" id="ANEVEMT"/>
<dbReference type="OrthoDB" id="6573040at2"/>
<dbReference type="BioCyc" id="EcoCyc:EG12327-MONOMER"/>
<dbReference type="PRO" id="PR:P37018"/>
<dbReference type="Proteomes" id="UP000000625">
    <property type="component" value="Chromosome"/>
</dbReference>
<dbReference type="GO" id="GO:0009289">
    <property type="term" value="C:pilus"/>
    <property type="evidence" value="ECO:0000318"/>
    <property type="project" value="GO_Central"/>
</dbReference>
<dbReference type="GO" id="GO:0007155">
    <property type="term" value="P:cell adhesion"/>
    <property type="evidence" value="ECO:0000315"/>
    <property type="project" value="EcoCyc"/>
</dbReference>
<dbReference type="GO" id="GO:0043709">
    <property type="term" value="P:cell adhesion involved in single-species biofilm formation"/>
    <property type="evidence" value="ECO:0000318"/>
    <property type="project" value="GO_Central"/>
</dbReference>
<dbReference type="Gene3D" id="2.60.40.1090">
    <property type="entry name" value="Fimbrial-type adhesion domain"/>
    <property type="match status" value="1"/>
</dbReference>
<dbReference type="InterPro" id="IPR000259">
    <property type="entry name" value="Adhesion_dom_fimbrial"/>
</dbReference>
<dbReference type="InterPro" id="IPR036937">
    <property type="entry name" value="Adhesion_dom_fimbrial_sf"/>
</dbReference>
<dbReference type="InterPro" id="IPR008966">
    <property type="entry name" value="Adhesion_dom_sf"/>
</dbReference>
<dbReference type="InterPro" id="IPR050263">
    <property type="entry name" value="Bact_Fimbrial_Adh_Pro"/>
</dbReference>
<dbReference type="PANTHER" id="PTHR33420">
    <property type="entry name" value="FIMBRIAL SUBUNIT ELFA-RELATED"/>
    <property type="match status" value="1"/>
</dbReference>
<dbReference type="PANTHER" id="PTHR33420:SF33">
    <property type="entry name" value="MINOR FIMBRIAL SUBUNIT"/>
    <property type="match status" value="1"/>
</dbReference>
<dbReference type="Pfam" id="PF00419">
    <property type="entry name" value="Fimbrial"/>
    <property type="match status" value="1"/>
</dbReference>
<dbReference type="SUPFAM" id="SSF49401">
    <property type="entry name" value="Bacterial adhesins"/>
    <property type="match status" value="1"/>
</dbReference>
<name>YADM_ECOLI</name>
<protein>
    <recommendedName>
        <fullName>Uncharacterized fimbrial-like protein YadM</fullName>
    </recommendedName>
</protein>
<comment type="function">
    <text evidence="3">Part of the yadCKLM-htrE-yadVN fimbrial operon. Could contribute to adhesion to various surfaces in specific environmental niches.</text>
</comment>
<comment type="subcellular location">
    <subcellularLocation>
        <location evidence="4">Fimbrium</location>
    </subcellularLocation>
</comment>
<comment type="induction">
    <text evidence="3">Repressed by H-NS.</text>
</comment>
<comment type="disruption phenotype">
    <text evidence="3">Deletion of the operon under classical laboratory conditions does not result in any major effect on E.coli capacity to form biofilms compared with the wild-type strain.</text>
</comment>
<comment type="miscellaneous">
    <text evidence="5">The operon is cryptic under classical laboratory conditions, but is functional when constitutively expressed.</text>
</comment>
<comment type="similarity">
    <text evidence="4">Belongs to the fimbrial protein family.</text>
</comment>
<evidence type="ECO:0000255" key="1"/>
<evidence type="ECO:0000256" key="2">
    <source>
        <dbReference type="SAM" id="MobiDB-lite"/>
    </source>
</evidence>
<evidence type="ECO:0000269" key="3">
    <source>
    </source>
</evidence>
<evidence type="ECO:0000305" key="4"/>
<evidence type="ECO:0000305" key="5">
    <source>
    </source>
</evidence>
<gene>
    <name type="primary">yadM</name>
    <name type="ordered locus">b0138</name>
    <name type="ordered locus">JW0134</name>
</gene>
<sequence length="189" mass="20307">MIKTTPHKIVILMGILLSPSVFATDINVEFTATVKATTCNITLTGNNVTNDGNNNYTLRIPKMGLDKIANKTTESQADFKLVASGCSSGISWIDTTLTGNASSSSPKLIIPQSGDSSSTTSNIGMGFKKRTTDDATFLKPNSAEKIRWSTDEMQPDKGLEMTVALRETDAGQGVPGNFRALATFNFIYQ</sequence>
<keyword id="KW-0281">Fimbrium</keyword>
<keyword id="KW-1185">Reference proteome</keyword>
<keyword id="KW-0732">Signal</keyword>
<accession>P37018</accession>
<accession>P75661</accession>
<proteinExistence type="evidence at transcript level"/>
<reference key="1">
    <citation type="journal article" date="1994" name="Nucleic Acids Res.">
        <title>Systematic sequencing of the Escherichia coli genome: analysis of the 2.4-4.1 min (110,917-193,643 bp) region.</title>
        <authorList>
            <person name="Fujita N."/>
            <person name="Mori H."/>
            <person name="Yura T."/>
            <person name="Ishihama A."/>
        </authorList>
    </citation>
    <scope>NUCLEOTIDE SEQUENCE [LARGE SCALE GENOMIC DNA]</scope>
    <source>
        <strain>K12 / W3110 / ATCC 27325 / DSM 5911</strain>
    </source>
</reference>
<reference key="2">
    <citation type="journal article" date="1997" name="Science">
        <title>The complete genome sequence of Escherichia coli K-12.</title>
        <authorList>
            <person name="Blattner F.R."/>
            <person name="Plunkett G. III"/>
            <person name="Bloch C.A."/>
            <person name="Perna N.T."/>
            <person name="Burland V."/>
            <person name="Riley M."/>
            <person name="Collado-Vides J."/>
            <person name="Glasner J.D."/>
            <person name="Rode C.K."/>
            <person name="Mayhew G.F."/>
            <person name="Gregor J."/>
            <person name="Davis N.W."/>
            <person name="Kirkpatrick H.A."/>
            <person name="Goeden M.A."/>
            <person name="Rose D.J."/>
            <person name="Mau B."/>
            <person name="Shao Y."/>
        </authorList>
    </citation>
    <scope>NUCLEOTIDE SEQUENCE [LARGE SCALE GENOMIC DNA]</scope>
    <source>
        <strain>K12 / MG1655 / ATCC 47076</strain>
    </source>
</reference>
<reference key="3">
    <citation type="journal article" date="2006" name="Mol. Syst. Biol.">
        <title>Highly accurate genome sequences of Escherichia coli K-12 strains MG1655 and W3110.</title>
        <authorList>
            <person name="Hayashi K."/>
            <person name="Morooka N."/>
            <person name="Yamamoto Y."/>
            <person name="Fujita K."/>
            <person name="Isono K."/>
            <person name="Choi S."/>
            <person name="Ohtsubo E."/>
            <person name="Baba T."/>
            <person name="Wanner B.L."/>
            <person name="Mori H."/>
            <person name="Horiuchi T."/>
        </authorList>
    </citation>
    <scope>NUCLEOTIDE SEQUENCE [LARGE SCALE GENOMIC DNA]</scope>
    <source>
        <strain>K12 / W3110 / ATCC 27325 / DSM 5911</strain>
    </source>
</reference>
<reference key="4">
    <citation type="journal article" date="2010" name="Environ. Microbiol.">
        <title>Escherichia coli K-12 possesses multiple cryptic but functional chaperone-usher fimbriae with distinct surface specificities.</title>
        <authorList>
            <person name="Korea C.G."/>
            <person name="Badouraly R."/>
            <person name="Prevost M.C."/>
            <person name="Ghigo J.M."/>
            <person name="Beloin C."/>
        </authorList>
    </citation>
    <scope>FUNCTION</scope>
    <scope>INDUCTION</scope>
    <scope>DISRUPTION PHENOTYPE</scope>
    <source>
        <strain>K12 / MG1655 / ATCC 47076</strain>
    </source>
</reference>